<comment type="function">
    <text evidence="4">Shows growth cone collapsing activity on dorsal root ganglion (DRG) neurons in vitro. May be a stop signal for the DRG neurons in their target areas, and possibly also for other neurons. May also be involved in the maintenance and remodeling of neuronal connections.</text>
</comment>
<comment type="subcellular location">
    <subcellularLocation>
        <location>Cell membrane</location>
        <topology>Single-pass type I membrane protein</topology>
    </subcellularLocation>
</comment>
<comment type="alternative products">
    <event type="alternative splicing"/>
    <isoform>
        <id>Q9H3T2-1</id>
        <name>1</name>
        <name>Short 1</name>
        <sequence type="displayed"/>
    </isoform>
    <isoform>
        <id>Q9H3T2-2</id>
        <name>2</name>
        <name>Short 2</name>
        <sequence type="described" ref="VSP_006046 VSP_006047"/>
    </isoform>
    <isoform>
        <id>Q9H3T2-3</id>
        <name>3</name>
        <name>Long</name>
        <sequence type="described" ref="VSP_006047"/>
    </isoform>
</comment>
<comment type="tissue specificity">
    <text evidence="4">In adult tissues, expressed only in skeletal muscle.</text>
</comment>
<comment type="similarity">
    <text evidence="7">Belongs to the semaphorin family.</text>
</comment>
<comment type="sequence caution" evidence="7">
    <conflict type="erroneous initiation">
        <sequence resource="EMBL-CDS" id="BAB47498"/>
    </conflict>
    <text>Extended N-terminus.</text>
</comment>
<name>SEM6C_HUMAN</name>
<organism>
    <name type="scientific">Homo sapiens</name>
    <name type="common">Human</name>
    <dbReference type="NCBI Taxonomy" id="9606"/>
    <lineage>
        <taxon>Eukaryota</taxon>
        <taxon>Metazoa</taxon>
        <taxon>Chordata</taxon>
        <taxon>Craniata</taxon>
        <taxon>Vertebrata</taxon>
        <taxon>Euteleostomi</taxon>
        <taxon>Mammalia</taxon>
        <taxon>Eutheria</taxon>
        <taxon>Euarchontoglires</taxon>
        <taxon>Primates</taxon>
        <taxon>Haplorrhini</taxon>
        <taxon>Catarrhini</taxon>
        <taxon>Hominidae</taxon>
        <taxon>Homo</taxon>
    </lineage>
</organism>
<reference key="1">
    <citation type="journal article" date="2002" name="J. Biol. Chem.">
        <title>Identification, characterization, and functional study of the two novel human members of the semaphorin gene family.</title>
        <authorList>
            <person name="Qu X."/>
            <person name="Wei H."/>
            <person name="Zhai Y."/>
            <person name="Que H."/>
            <person name="Chen Q."/>
            <person name="Tang F."/>
            <person name="Wu Y."/>
            <person name="Xing G."/>
            <person name="Zhu Y."/>
            <person name="Liu S."/>
            <person name="Fan M."/>
            <person name="He F."/>
        </authorList>
    </citation>
    <scope>NUCLEOTIDE SEQUENCE [MRNA] (ISOFORMS 1; 2 AND 3)</scope>
    <scope>FUNCTION</scope>
    <scope>TISSUE SPECIFICITY</scope>
    <scope>VARIANT PRO-455</scope>
    <source>
        <tissue>Brain</tissue>
    </source>
</reference>
<reference key="2">
    <citation type="submission" date="1999-01" db="EMBL/GenBank/DDBJ databases">
        <authorList>
            <person name="Kimura T."/>
            <person name="Ishida H."/>
        </authorList>
    </citation>
    <scope>NUCLEOTIDE SEQUENCE [MRNA] (ISOFORM 1)</scope>
    <source>
        <tissue>Brain</tissue>
    </source>
</reference>
<reference key="3">
    <citation type="journal article" date="2001" name="DNA Res.">
        <title>Prediction of the coding sequences of unidentified human genes. XX. The complete sequences of 100 new cDNA clones from brain which code for large proteins in vitro.</title>
        <authorList>
            <person name="Nagase T."/>
            <person name="Nakayama M."/>
            <person name="Nakajima D."/>
            <person name="Kikuno R."/>
            <person name="Ohara O."/>
        </authorList>
    </citation>
    <scope>NUCLEOTIDE SEQUENCE [LARGE SCALE MRNA] (ISOFORM 1)</scope>
    <source>
        <tissue>Brain</tissue>
    </source>
</reference>
<reference key="4">
    <citation type="journal article" date="2006" name="Nature">
        <title>The DNA sequence and biological annotation of human chromosome 1.</title>
        <authorList>
            <person name="Gregory S.G."/>
            <person name="Barlow K.F."/>
            <person name="McLay K.E."/>
            <person name="Kaul R."/>
            <person name="Swarbreck D."/>
            <person name="Dunham A."/>
            <person name="Scott C.E."/>
            <person name="Howe K.L."/>
            <person name="Woodfine K."/>
            <person name="Spencer C.C.A."/>
            <person name="Jones M.C."/>
            <person name="Gillson C."/>
            <person name="Searle S."/>
            <person name="Zhou Y."/>
            <person name="Kokocinski F."/>
            <person name="McDonald L."/>
            <person name="Evans R."/>
            <person name="Phillips K."/>
            <person name="Atkinson A."/>
            <person name="Cooper R."/>
            <person name="Jones C."/>
            <person name="Hall R.E."/>
            <person name="Andrews T.D."/>
            <person name="Lloyd C."/>
            <person name="Ainscough R."/>
            <person name="Almeida J.P."/>
            <person name="Ambrose K.D."/>
            <person name="Anderson F."/>
            <person name="Andrew R.W."/>
            <person name="Ashwell R.I.S."/>
            <person name="Aubin K."/>
            <person name="Babbage A.K."/>
            <person name="Bagguley C.L."/>
            <person name="Bailey J."/>
            <person name="Beasley H."/>
            <person name="Bethel G."/>
            <person name="Bird C.P."/>
            <person name="Bray-Allen S."/>
            <person name="Brown J.Y."/>
            <person name="Brown A.J."/>
            <person name="Buckley D."/>
            <person name="Burton J."/>
            <person name="Bye J."/>
            <person name="Carder C."/>
            <person name="Chapman J.C."/>
            <person name="Clark S.Y."/>
            <person name="Clarke G."/>
            <person name="Clee C."/>
            <person name="Cobley V."/>
            <person name="Collier R.E."/>
            <person name="Corby N."/>
            <person name="Coville G.J."/>
            <person name="Davies J."/>
            <person name="Deadman R."/>
            <person name="Dunn M."/>
            <person name="Earthrowl M."/>
            <person name="Ellington A.G."/>
            <person name="Errington H."/>
            <person name="Frankish A."/>
            <person name="Frankland J."/>
            <person name="French L."/>
            <person name="Garner P."/>
            <person name="Garnett J."/>
            <person name="Gay L."/>
            <person name="Ghori M.R.J."/>
            <person name="Gibson R."/>
            <person name="Gilby L.M."/>
            <person name="Gillett W."/>
            <person name="Glithero R.J."/>
            <person name="Grafham D.V."/>
            <person name="Griffiths C."/>
            <person name="Griffiths-Jones S."/>
            <person name="Grocock R."/>
            <person name="Hammond S."/>
            <person name="Harrison E.S.I."/>
            <person name="Hart E."/>
            <person name="Haugen E."/>
            <person name="Heath P.D."/>
            <person name="Holmes S."/>
            <person name="Holt K."/>
            <person name="Howden P.J."/>
            <person name="Hunt A.R."/>
            <person name="Hunt S.E."/>
            <person name="Hunter G."/>
            <person name="Isherwood J."/>
            <person name="James R."/>
            <person name="Johnson C."/>
            <person name="Johnson D."/>
            <person name="Joy A."/>
            <person name="Kay M."/>
            <person name="Kershaw J.K."/>
            <person name="Kibukawa M."/>
            <person name="Kimberley A.M."/>
            <person name="King A."/>
            <person name="Knights A.J."/>
            <person name="Lad H."/>
            <person name="Laird G."/>
            <person name="Lawlor S."/>
            <person name="Leongamornlert D.A."/>
            <person name="Lloyd D.M."/>
            <person name="Loveland J."/>
            <person name="Lovell J."/>
            <person name="Lush M.J."/>
            <person name="Lyne R."/>
            <person name="Martin S."/>
            <person name="Mashreghi-Mohammadi M."/>
            <person name="Matthews L."/>
            <person name="Matthews N.S.W."/>
            <person name="McLaren S."/>
            <person name="Milne S."/>
            <person name="Mistry S."/>
            <person name="Moore M.J.F."/>
            <person name="Nickerson T."/>
            <person name="O'Dell C.N."/>
            <person name="Oliver K."/>
            <person name="Palmeiri A."/>
            <person name="Palmer S.A."/>
            <person name="Parker A."/>
            <person name="Patel D."/>
            <person name="Pearce A.V."/>
            <person name="Peck A.I."/>
            <person name="Pelan S."/>
            <person name="Phelps K."/>
            <person name="Phillimore B.J."/>
            <person name="Plumb R."/>
            <person name="Rajan J."/>
            <person name="Raymond C."/>
            <person name="Rouse G."/>
            <person name="Saenphimmachak C."/>
            <person name="Sehra H.K."/>
            <person name="Sheridan E."/>
            <person name="Shownkeen R."/>
            <person name="Sims S."/>
            <person name="Skuce C.D."/>
            <person name="Smith M."/>
            <person name="Steward C."/>
            <person name="Subramanian S."/>
            <person name="Sycamore N."/>
            <person name="Tracey A."/>
            <person name="Tromans A."/>
            <person name="Van Helmond Z."/>
            <person name="Wall M."/>
            <person name="Wallis J.M."/>
            <person name="White S."/>
            <person name="Whitehead S.L."/>
            <person name="Wilkinson J.E."/>
            <person name="Willey D.L."/>
            <person name="Williams H."/>
            <person name="Wilming L."/>
            <person name="Wray P.W."/>
            <person name="Wu Z."/>
            <person name="Coulson A."/>
            <person name="Vaudin M."/>
            <person name="Sulston J.E."/>
            <person name="Durbin R.M."/>
            <person name="Hubbard T."/>
            <person name="Wooster R."/>
            <person name="Dunham I."/>
            <person name="Carter N.P."/>
            <person name="McVean G."/>
            <person name="Ross M.T."/>
            <person name="Harrow J."/>
            <person name="Olson M.V."/>
            <person name="Beck S."/>
            <person name="Rogers J."/>
            <person name="Bentley D.R."/>
        </authorList>
    </citation>
    <scope>NUCLEOTIDE SEQUENCE [LARGE SCALE GENOMIC DNA]</scope>
</reference>
<reference key="5">
    <citation type="submission" date="2005-09" db="EMBL/GenBank/DDBJ databases">
        <authorList>
            <person name="Mural R.J."/>
            <person name="Istrail S."/>
            <person name="Sutton G.G."/>
            <person name="Florea L."/>
            <person name="Halpern A.L."/>
            <person name="Mobarry C.M."/>
            <person name="Lippert R."/>
            <person name="Walenz B."/>
            <person name="Shatkay H."/>
            <person name="Dew I."/>
            <person name="Miller J.R."/>
            <person name="Flanigan M.J."/>
            <person name="Edwards N.J."/>
            <person name="Bolanos R."/>
            <person name="Fasulo D."/>
            <person name="Halldorsson B.V."/>
            <person name="Hannenhalli S."/>
            <person name="Turner R."/>
            <person name="Yooseph S."/>
            <person name="Lu F."/>
            <person name="Nusskern D.R."/>
            <person name="Shue B.C."/>
            <person name="Zheng X.H."/>
            <person name="Zhong F."/>
            <person name="Delcher A.L."/>
            <person name="Huson D.H."/>
            <person name="Kravitz S.A."/>
            <person name="Mouchard L."/>
            <person name="Reinert K."/>
            <person name="Remington K.A."/>
            <person name="Clark A.G."/>
            <person name="Waterman M.S."/>
            <person name="Eichler E.E."/>
            <person name="Adams M.D."/>
            <person name="Hunkapiller M.W."/>
            <person name="Myers E.W."/>
            <person name="Venter J.C."/>
        </authorList>
    </citation>
    <scope>NUCLEOTIDE SEQUENCE [LARGE SCALE GENOMIC DNA]</scope>
    <scope>VARIANT PRO-455</scope>
</reference>
<sequence length="930" mass="99686">MPRAPHFMPLLLLLLLLSLPHTQAAFPQDPLPLLISDLQGTSPLSWFRGLEDDAVAAELGLDFQRFLTLNRTLLVAARDHVFSFDLQAEEEGEGLVPNKYLTWRSQDVENCAVRGKLTDECYNYIRVLVPWDSQTLLACGTNSFSPVCRSYGITSLQQEGEELSGQARCPFDATQSNVAIFAEGSLYSATAADFQASDAVVYRSLGPQPPLRSAKYDSKWLREPHFVQALEHGDHVYFFFREVSVEDARLGRVQFSRVARVCKRDMGGSPRALDRHWTSFLKLRLNCSVPGDSTFYFDVLQALTGPVNLHGRSALFGVFTTQTNSIPGSAVCAFYLDEIERGFEGKFKEQRSLDGAWTPVSEDRVPSPRPGSCAGVGGAALFSSSRDLPDDVLTFIKAHPLLDPAVPPVTHQPLLTLTSRALLTQVAVDGMAGPHSNITVMFLGSNDGTVLKVLTPGGRSGGPEPILLEEIDAYSPARCSGKRTAQTARRIIGLELDTEGHRLFVAFSGCIVYLPLSRCARHGACQRSCLASQDPYCGWHSSRGCVDIRGSGGTDVDQAGNQESMEHGDCQDGATGSQSGPGDSAYGVRRDLPPASASRSVPIPLLLASVAAAFALGASVSGLLVSCACRRAHRRRGKDIETPGLPRPLSLRSLARLHGGGPEPPPPSKDGDAVQTPQLYTTFLPPPEGVPPPELACLPTPESTPELPVKHLRAAGDPWEWNQNRNNAKEGPGRSRGGHAAGGPAPRVLVRPPPPGCPGQAVEVTTLEELLRYLHGPQPPRKGAEPPAPLTSRALPPEPAPALLGGPSPRPHECASPLRLDVPPEGRCASAPARPALSAPAPRLGVGGGRRLPFSGHRAPPALLTRVPSGGPSRYSGGPGKHLLYLGRPEGYRGRALKRVDVEKPQLSLKPPLVGPSSRQAVPNGGRFNF</sequence>
<keyword id="KW-0025">Alternative splicing</keyword>
<keyword id="KW-1003">Cell membrane</keyword>
<keyword id="KW-0217">Developmental protein</keyword>
<keyword id="KW-0221">Differentiation</keyword>
<keyword id="KW-1015">Disulfide bond</keyword>
<keyword id="KW-0325">Glycoprotein</keyword>
<keyword id="KW-0472">Membrane</keyword>
<keyword id="KW-0524">Neurogenesis</keyword>
<keyword id="KW-1267">Proteomics identification</keyword>
<keyword id="KW-1185">Reference proteome</keyword>
<keyword id="KW-0732">Signal</keyword>
<keyword id="KW-0812">Transmembrane</keyword>
<keyword id="KW-1133">Transmembrane helix</keyword>
<accession>Q9H3T2</accession>
<accession>D3DV15</accession>
<accession>Q5JR71</accession>
<accession>Q5JR72</accession>
<accession>Q5JR73</accession>
<accession>Q8WXT8</accession>
<accession>Q8WXT9</accession>
<accession>Q8WXU0</accession>
<accession>Q96JF8</accession>
<feature type="signal peptide" evidence="1">
    <location>
        <begin position="1"/>
        <end position="24"/>
    </location>
</feature>
<feature type="chain" id="PRO_0000032344" description="Semaphorin-6C">
    <location>
        <begin position="25"/>
        <end position="930"/>
    </location>
</feature>
<feature type="topological domain" description="Extracellular" evidence="1">
    <location>
        <begin position="25"/>
        <end position="604"/>
    </location>
</feature>
<feature type="transmembrane region" description="Helical" evidence="1">
    <location>
        <begin position="605"/>
        <end position="625"/>
    </location>
</feature>
<feature type="topological domain" description="Cytoplasmic" evidence="1">
    <location>
        <begin position="626"/>
        <end position="930"/>
    </location>
</feature>
<feature type="domain" description="Sema" evidence="2">
    <location>
        <begin position="30"/>
        <end position="516"/>
    </location>
</feature>
<feature type="region of interest" description="Disordered" evidence="3">
    <location>
        <begin position="554"/>
        <end position="593"/>
    </location>
</feature>
<feature type="region of interest" description="Disordered" evidence="3">
    <location>
        <begin position="654"/>
        <end position="674"/>
    </location>
</feature>
<feature type="region of interest" description="Disordered" evidence="3">
    <location>
        <begin position="716"/>
        <end position="761"/>
    </location>
</feature>
<feature type="region of interest" description="Disordered" evidence="3">
    <location>
        <begin position="775"/>
        <end position="882"/>
    </location>
</feature>
<feature type="region of interest" description="Disordered" evidence="3">
    <location>
        <begin position="908"/>
        <end position="930"/>
    </location>
</feature>
<feature type="compositionally biased region" description="Low complexity" evidence="3">
    <location>
        <begin position="829"/>
        <end position="844"/>
    </location>
</feature>
<feature type="glycosylation site" description="N-linked (GlcNAc...) asparagine" evidence="1">
    <location>
        <position position="70"/>
    </location>
</feature>
<feature type="glycosylation site" description="N-linked (GlcNAc...) asparagine" evidence="1">
    <location>
        <position position="286"/>
    </location>
</feature>
<feature type="glycosylation site" description="N-linked (GlcNAc...) asparagine" evidence="1">
    <location>
        <position position="437"/>
    </location>
</feature>
<feature type="disulfide bond" evidence="2">
    <location>
        <begin position="111"/>
        <end position="121"/>
    </location>
</feature>
<feature type="disulfide bond" evidence="2">
    <location>
        <begin position="139"/>
        <end position="148"/>
    </location>
</feature>
<feature type="disulfide bond" evidence="2">
    <location>
        <begin position="262"/>
        <end position="373"/>
    </location>
</feature>
<feature type="disulfide bond" evidence="2">
    <location>
        <begin position="287"/>
        <end position="332"/>
    </location>
</feature>
<feature type="disulfide bond" evidence="2">
    <location>
        <begin position="479"/>
        <end position="510"/>
    </location>
</feature>
<feature type="disulfide bond" evidence="2">
    <location>
        <begin position="519"/>
        <end position="537"/>
    </location>
</feature>
<feature type="disulfide bond" evidence="2">
    <location>
        <begin position="525"/>
        <end position="570"/>
    </location>
</feature>
<feature type="disulfide bond" evidence="2">
    <location>
        <begin position="529"/>
        <end position="545"/>
    </location>
</feature>
<feature type="splice variant" id="VSP_006046" description="In isoform 2." evidence="6">
    <location>
        <begin position="184"/>
        <end position="223"/>
    </location>
</feature>
<feature type="splice variant" id="VSP_006047" description="In isoform 2 and isoform 3." evidence="6">
    <original>Y</original>
    <variation>YVLPGPGPSPGTPSPPSDAHPRPQSSTLGVHTR</variation>
    <location>
        <position position="586"/>
    </location>
</feature>
<feature type="sequence variant" id="VAR_028144" description="In dbSNP:rs4971007." evidence="4 5">
    <original>T</original>
    <variation>P</variation>
    <location>
        <position position="455"/>
    </location>
</feature>
<feature type="sequence conflict" description="In Ref. 1; AAL72099." evidence="7" ref="1">
    <original>I</original>
    <variation>V</variation>
    <location>
        <position position="125"/>
    </location>
</feature>
<feature type="sequence conflict" description="In Ref. 2; BAB20670." evidence="7" ref="2">
    <original>R</original>
    <variation>K</variation>
    <location>
        <position position="252"/>
    </location>
</feature>
<evidence type="ECO:0000255" key="1"/>
<evidence type="ECO:0000255" key="2">
    <source>
        <dbReference type="PROSITE-ProRule" id="PRU00352"/>
    </source>
</evidence>
<evidence type="ECO:0000256" key="3">
    <source>
        <dbReference type="SAM" id="MobiDB-lite"/>
    </source>
</evidence>
<evidence type="ECO:0000269" key="4">
    <source>
    </source>
</evidence>
<evidence type="ECO:0000269" key="5">
    <source ref="5"/>
</evidence>
<evidence type="ECO:0000303" key="6">
    <source>
    </source>
</evidence>
<evidence type="ECO:0000305" key="7"/>
<protein>
    <recommendedName>
        <fullName>Semaphorin-6C</fullName>
    </recommendedName>
    <alternativeName>
        <fullName>Semaphorin-Y</fullName>
        <shortName>Sema Y</shortName>
    </alternativeName>
</protein>
<dbReference type="EMBL" id="AF339152">
    <property type="protein sequence ID" value="AAL72098.1"/>
    <property type="molecule type" value="mRNA"/>
</dbReference>
<dbReference type="EMBL" id="AF339153">
    <property type="protein sequence ID" value="AAL72099.1"/>
    <property type="molecule type" value="mRNA"/>
</dbReference>
<dbReference type="EMBL" id="AF339154">
    <property type="protein sequence ID" value="AAL72100.1"/>
    <property type="molecule type" value="mRNA"/>
</dbReference>
<dbReference type="EMBL" id="AB022434">
    <property type="protein sequence ID" value="BAB20670.1"/>
    <property type="molecule type" value="mRNA"/>
</dbReference>
<dbReference type="EMBL" id="AB058772">
    <property type="protein sequence ID" value="BAB47498.1"/>
    <property type="status" value="ALT_INIT"/>
    <property type="molecule type" value="mRNA"/>
</dbReference>
<dbReference type="EMBL" id="AL592424">
    <property type="status" value="NOT_ANNOTATED_CDS"/>
    <property type="molecule type" value="Genomic_DNA"/>
</dbReference>
<dbReference type="EMBL" id="CH471121">
    <property type="protein sequence ID" value="EAW53470.1"/>
    <property type="molecule type" value="Genomic_DNA"/>
</dbReference>
<dbReference type="EMBL" id="CH471121">
    <property type="protein sequence ID" value="EAW53472.1"/>
    <property type="molecule type" value="Genomic_DNA"/>
</dbReference>
<dbReference type="CCDS" id="CCDS53363.1">
    <molecule id="Q9H3T2-2"/>
</dbReference>
<dbReference type="CCDS" id="CCDS53364.1">
    <molecule id="Q9H3T2-3"/>
</dbReference>
<dbReference type="CCDS" id="CCDS984.1">
    <molecule id="Q9H3T2-1"/>
</dbReference>
<dbReference type="RefSeq" id="NP_001171532.1">
    <molecule id="Q9H3T2-3"/>
    <property type="nucleotide sequence ID" value="NM_001178061.3"/>
</dbReference>
<dbReference type="RefSeq" id="NP_001171533.1">
    <molecule id="Q9H3T2-2"/>
    <property type="nucleotide sequence ID" value="NM_001178062.3"/>
</dbReference>
<dbReference type="RefSeq" id="NP_112175.2">
    <molecule id="Q9H3T2-1"/>
    <property type="nucleotide sequence ID" value="NM_030913.4"/>
</dbReference>
<dbReference type="RefSeq" id="XP_005244892.1">
    <molecule id="Q9H3T2-3"/>
    <property type="nucleotide sequence ID" value="XM_005244835.4"/>
</dbReference>
<dbReference type="RefSeq" id="XP_016855564.1">
    <property type="nucleotide sequence ID" value="XM_017000075.1"/>
</dbReference>
<dbReference type="RefSeq" id="XP_016855565.1">
    <property type="nucleotide sequence ID" value="XM_017000076.1"/>
</dbReference>
<dbReference type="RefSeq" id="XP_016855566.1">
    <property type="nucleotide sequence ID" value="XM_017000077.1"/>
</dbReference>
<dbReference type="RefSeq" id="XP_016855567.1">
    <property type="nucleotide sequence ID" value="XM_017000078.1"/>
</dbReference>
<dbReference type="RefSeq" id="XP_016855568.1">
    <property type="nucleotide sequence ID" value="XM_017000079.1"/>
</dbReference>
<dbReference type="RefSeq" id="XP_016855569.1">
    <property type="nucleotide sequence ID" value="XM_017000080.1"/>
</dbReference>
<dbReference type="RefSeq" id="XP_016855570.1">
    <property type="nucleotide sequence ID" value="XM_017000081.1"/>
</dbReference>
<dbReference type="RefSeq" id="XP_047287732.1">
    <molecule id="Q9H3T2-3"/>
    <property type="nucleotide sequence ID" value="XM_047431776.1"/>
</dbReference>
<dbReference type="RefSeq" id="XP_047287749.1">
    <molecule id="Q9H3T2-3"/>
    <property type="nucleotide sequence ID" value="XM_047431793.1"/>
</dbReference>
<dbReference type="RefSeq" id="XP_047287798.1">
    <molecule id="Q9H3T2-3"/>
    <property type="nucleotide sequence ID" value="XM_047431842.1"/>
</dbReference>
<dbReference type="RefSeq" id="XP_047287879.1">
    <molecule id="Q9H3T2-1"/>
    <property type="nucleotide sequence ID" value="XM_047431923.1"/>
</dbReference>
<dbReference type="RefSeq" id="XP_047287893.1">
    <molecule id="Q9H3T2-2"/>
    <property type="nucleotide sequence ID" value="XM_047431937.1"/>
</dbReference>
<dbReference type="SMR" id="Q9H3T2"/>
<dbReference type="BioGRID" id="115762">
    <property type="interactions" value="16"/>
</dbReference>
<dbReference type="FunCoup" id="Q9H3T2">
    <property type="interactions" value="156"/>
</dbReference>
<dbReference type="IntAct" id="Q9H3T2">
    <property type="interactions" value="1"/>
</dbReference>
<dbReference type="STRING" id="9606.ENSP00000357909"/>
<dbReference type="GlyCosmos" id="Q9H3T2">
    <property type="glycosylation" value="3 sites, No reported glycans"/>
</dbReference>
<dbReference type="GlyGen" id="Q9H3T2">
    <property type="glycosylation" value="3 sites"/>
</dbReference>
<dbReference type="iPTMnet" id="Q9H3T2"/>
<dbReference type="PhosphoSitePlus" id="Q9H3T2"/>
<dbReference type="BioMuta" id="SEMA6C"/>
<dbReference type="DMDM" id="313104318"/>
<dbReference type="jPOST" id="Q9H3T2"/>
<dbReference type="MassIVE" id="Q9H3T2"/>
<dbReference type="PaxDb" id="9606-ENSP00000357909"/>
<dbReference type="PeptideAtlas" id="Q9H3T2"/>
<dbReference type="ProteomicsDB" id="80751">
    <molecule id="Q9H3T2-1"/>
</dbReference>
<dbReference type="ProteomicsDB" id="80752">
    <molecule id="Q9H3T2-2"/>
</dbReference>
<dbReference type="ProteomicsDB" id="80753">
    <molecule id="Q9H3T2-3"/>
</dbReference>
<dbReference type="TopDownProteomics" id="Q9H3T2-2">
    <molecule id="Q9H3T2-2"/>
</dbReference>
<dbReference type="Antibodypedia" id="34050">
    <property type="antibodies" value="112 antibodies from 12 providers"/>
</dbReference>
<dbReference type="DNASU" id="10500"/>
<dbReference type="Ensembl" id="ENST00000341697.7">
    <molecule id="Q9H3T2-1"/>
    <property type="protein sequence ID" value="ENSP00000344148.3"/>
    <property type="gene ID" value="ENSG00000143434.17"/>
</dbReference>
<dbReference type="Ensembl" id="ENST00000368912.7">
    <molecule id="Q9H3T2-2"/>
    <property type="protein sequence ID" value="ENSP00000357908.3"/>
    <property type="gene ID" value="ENSG00000143434.17"/>
</dbReference>
<dbReference type="Ensembl" id="ENST00000368913.7">
    <molecule id="Q9H3T2-3"/>
    <property type="protein sequence ID" value="ENSP00000357909.3"/>
    <property type="gene ID" value="ENSG00000143434.17"/>
</dbReference>
<dbReference type="Ensembl" id="ENST00000368914.8">
    <molecule id="Q9H3T2-1"/>
    <property type="protein sequence ID" value="ENSP00000357910.3"/>
    <property type="gene ID" value="ENSG00000143434.17"/>
</dbReference>
<dbReference type="GeneID" id="10500"/>
<dbReference type="KEGG" id="hsa:10500"/>
<dbReference type="MANE-Select" id="ENST00000368914.8">
    <property type="protein sequence ID" value="ENSP00000357910.3"/>
    <property type="RefSeq nucleotide sequence ID" value="NM_030913.6"/>
    <property type="RefSeq protein sequence ID" value="NP_112175.2"/>
</dbReference>
<dbReference type="UCSC" id="uc001ewu.4">
    <molecule id="Q9H3T2-1"/>
    <property type="organism name" value="human"/>
</dbReference>
<dbReference type="AGR" id="HGNC:10740"/>
<dbReference type="CTD" id="10500"/>
<dbReference type="DisGeNET" id="10500"/>
<dbReference type="GeneCards" id="SEMA6C"/>
<dbReference type="HGNC" id="HGNC:10740">
    <property type="gene designation" value="SEMA6C"/>
</dbReference>
<dbReference type="HPA" id="ENSG00000143434">
    <property type="expression patterns" value="Tissue enhanced (skeletal muscle, tongue)"/>
</dbReference>
<dbReference type="MIM" id="609294">
    <property type="type" value="gene"/>
</dbReference>
<dbReference type="neXtProt" id="NX_Q9H3T2"/>
<dbReference type="OpenTargets" id="ENSG00000143434"/>
<dbReference type="PharmGKB" id="PA35662"/>
<dbReference type="VEuPathDB" id="HostDB:ENSG00000143434"/>
<dbReference type="eggNOG" id="KOG3611">
    <property type="taxonomic scope" value="Eukaryota"/>
</dbReference>
<dbReference type="GeneTree" id="ENSGT00940000158641"/>
<dbReference type="HOGENOM" id="CLU_009051_2_1_1"/>
<dbReference type="InParanoid" id="Q9H3T2"/>
<dbReference type="OMA" id="DVGTWGC"/>
<dbReference type="OrthoDB" id="9988752at2759"/>
<dbReference type="PAN-GO" id="Q9H3T2">
    <property type="GO annotations" value="10 GO annotations based on evolutionary models"/>
</dbReference>
<dbReference type="PhylomeDB" id="Q9H3T2"/>
<dbReference type="TreeFam" id="TF316102"/>
<dbReference type="PathwayCommons" id="Q9H3T2"/>
<dbReference type="BioGRID-ORCS" id="10500">
    <property type="hits" value="7 hits in 1152 CRISPR screens"/>
</dbReference>
<dbReference type="GeneWiki" id="SEMA6C"/>
<dbReference type="GenomeRNAi" id="10500"/>
<dbReference type="Pharos" id="Q9H3T2">
    <property type="development level" value="Tbio"/>
</dbReference>
<dbReference type="PRO" id="PR:Q9H3T2"/>
<dbReference type="Proteomes" id="UP000005640">
    <property type="component" value="Chromosome 1"/>
</dbReference>
<dbReference type="RNAct" id="Q9H3T2">
    <property type="molecule type" value="protein"/>
</dbReference>
<dbReference type="Bgee" id="ENSG00000143434">
    <property type="expression patterns" value="Expressed in hindlimb stylopod muscle and 112 other cell types or tissues"/>
</dbReference>
<dbReference type="ExpressionAtlas" id="Q9H3T2">
    <property type="expression patterns" value="baseline and differential"/>
</dbReference>
<dbReference type="GO" id="GO:0009986">
    <property type="term" value="C:cell surface"/>
    <property type="evidence" value="ECO:0000315"/>
    <property type="project" value="UniProtKB"/>
</dbReference>
<dbReference type="GO" id="GO:0005737">
    <property type="term" value="C:cytoplasm"/>
    <property type="evidence" value="ECO:0000315"/>
    <property type="project" value="UniProtKB"/>
</dbReference>
<dbReference type="GO" id="GO:0005886">
    <property type="term" value="C:plasma membrane"/>
    <property type="evidence" value="ECO:0000318"/>
    <property type="project" value="GO_Central"/>
</dbReference>
<dbReference type="GO" id="GO:0045499">
    <property type="term" value="F:chemorepellent activity"/>
    <property type="evidence" value="ECO:0000318"/>
    <property type="project" value="GO_Central"/>
</dbReference>
<dbReference type="GO" id="GO:0030215">
    <property type="term" value="F:semaphorin receptor binding"/>
    <property type="evidence" value="ECO:0000318"/>
    <property type="project" value="GO_Central"/>
</dbReference>
<dbReference type="GO" id="GO:0007411">
    <property type="term" value="P:axon guidance"/>
    <property type="evidence" value="ECO:0000318"/>
    <property type="project" value="GO_Central"/>
</dbReference>
<dbReference type="GO" id="GO:0030517">
    <property type="term" value="P:negative regulation of axon extension"/>
    <property type="evidence" value="ECO:0000314"/>
    <property type="project" value="UniProtKB"/>
</dbReference>
<dbReference type="GO" id="GO:0001755">
    <property type="term" value="P:neural crest cell migration"/>
    <property type="evidence" value="ECO:0000318"/>
    <property type="project" value="GO_Central"/>
</dbReference>
<dbReference type="GO" id="GO:0030335">
    <property type="term" value="P:positive regulation of cell migration"/>
    <property type="evidence" value="ECO:0000318"/>
    <property type="project" value="GO_Central"/>
</dbReference>
<dbReference type="GO" id="GO:0071526">
    <property type="term" value="P:semaphorin-plexin signaling pathway"/>
    <property type="evidence" value="ECO:0000318"/>
    <property type="project" value="GO_Central"/>
</dbReference>
<dbReference type="FunFam" id="2.130.10.10:FF:000184">
    <property type="entry name" value="semaphorin-6C isoform X1"/>
    <property type="match status" value="1"/>
</dbReference>
<dbReference type="FunFam" id="3.30.1680.10:FF:000015">
    <property type="entry name" value="semaphorin-6C isoform X1"/>
    <property type="match status" value="1"/>
</dbReference>
<dbReference type="Gene3D" id="3.30.1680.10">
    <property type="entry name" value="ligand-binding face of the semaphorins, domain 2"/>
    <property type="match status" value="1"/>
</dbReference>
<dbReference type="Gene3D" id="2.130.10.10">
    <property type="entry name" value="YVTN repeat-like/Quinoprotein amine dehydrogenase"/>
    <property type="match status" value="1"/>
</dbReference>
<dbReference type="InterPro" id="IPR001627">
    <property type="entry name" value="Semap_dom"/>
</dbReference>
<dbReference type="InterPro" id="IPR036352">
    <property type="entry name" value="Semap_dom_sf"/>
</dbReference>
<dbReference type="InterPro" id="IPR027231">
    <property type="entry name" value="Semaphorin"/>
</dbReference>
<dbReference type="InterPro" id="IPR015943">
    <property type="entry name" value="WD40/YVTN_repeat-like_dom_sf"/>
</dbReference>
<dbReference type="PANTHER" id="PTHR11036">
    <property type="entry name" value="SEMAPHORIN"/>
    <property type="match status" value="1"/>
</dbReference>
<dbReference type="PANTHER" id="PTHR11036:SF11">
    <property type="entry name" value="SEMAPHORIN-6C"/>
    <property type="match status" value="1"/>
</dbReference>
<dbReference type="Pfam" id="PF01403">
    <property type="entry name" value="Sema"/>
    <property type="match status" value="1"/>
</dbReference>
<dbReference type="SMART" id="SM00630">
    <property type="entry name" value="Sema"/>
    <property type="match status" value="1"/>
</dbReference>
<dbReference type="SUPFAM" id="SSF103575">
    <property type="entry name" value="Plexin repeat"/>
    <property type="match status" value="1"/>
</dbReference>
<dbReference type="SUPFAM" id="SSF101912">
    <property type="entry name" value="Sema domain"/>
    <property type="match status" value="1"/>
</dbReference>
<dbReference type="PROSITE" id="PS51004">
    <property type="entry name" value="SEMA"/>
    <property type="match status" value="1"/>
</dbReference>
<proteinExistence type="evidence at protein level"/>
<gene>
    <name type="primary">SEMA6C</name>
    <name type="synonym">KIAA1869</name>
    <name type="synonym">SEMAY</name>
</gene>